<reference key="1">
    <citation type="submission" date="2006-08" db="EMBL/GenBank/DDBJ databases">
        <title>Complete sequence of Shewanella frigidimarina NCIMB 400.</title>
        <authorList>
            <consortium name="US DOE Joint Genome Institute"/>
            <person name="Copeland A."/>
            <person name="Lucas S."/>
            <person name="Lapidus A."/>
            <person name="Barry K."/>
            <person name="Detter J.C."/>
            <person name="Glavina del Rio T."/>
            <person name="Hammon N."/>
            <person name="Israni S."/>
            <person name="Dalin E."/>
            <person name="Tice H."/>
            <person name="Pitluck S."/>
            <person name="Fredrickson J.K."/>
            <person name="Kolker E."/>
            <person name="McCuel L.A."/>
            <person name="DiChristina T."/>
            <person name="Nealson K.H."/>
            <person name="Newman D."/>
            <person name="Tiedje J.M."/>
            <person name="Zhou J."/>
            <person name="Romine M.F."/>
            <person name="Culley D.E."/>
            <person name="Serres M."/>
            <person name="Chertkov O."/>
            <person name="Brettin T."/>
            <person name="Bruce D."/>
            <person name="Han C."/>
            <person name="Tapia R."/>
            <person name="Gilna P."/>
            <person name="Schmutz J."/>
            <person name="Larimer F."/>
            <person name="Land M."/>
            <person name="Hauser L."/>
            <person name="Kyrpides N."/>
            <person name="Mikhailova N."/>
            <person name="Richardson P."/>
        </authorList>
    </citation>
    <scope>NUCLEOTIDE SEQUENCE [LARGE SCALE GENOMIC DNA]</scope>
    <source>
        <strain>NCIMB 400</strain>
    </source>
</reference>
<accession>Q089V0</accession>
<gene>
    <name evidence="1" type="primary">hslO</name>
    <name type="ordered locus">Sfri_0102</name>
</gene>
<feature type="chain" id="PRO_1000015566" description="33 kDa chaperonin">
    <location>
        <begin position="1"/>
        <end position="286"/>
    </location>
</feature>
<feature type="disulfide bond" description="Redox-active" evidence="1">
    <location>
        <begin position="225"/>
        <end position="227"/>
    </location>
</feature>
<feature type="disulfide bond" description="Redox-active" evidence="1">
    <location>
        <begin position="258"/>
        <end position="261"/>
    </location>
</feature>
<comment type="function">
    <text evidence="1">Redox regulated molecular chaperone. Protects both thermally unfolding and oxidatively damaged proteins from irreversible aggregation. Plays an important role in the bacterial defense system toward oxidative stress.</text>
</comment>
<comment type="subcellular location">
    <subcellularLocation>
        <location evidence="1">Cytoplasm</location>
    </subcellularLocation>
</comment>
<comment type="PTM">
    <text evidence="1">Under oxidizing conditions two disulfide bonds are formed involving the reactive cysteines. Under reducing conditions zinc is bound to the reactive cysteines and the protein is inactive.</text>
</comment>
<comment type="similarity">
    <text evidence="1">Belongs to the HSP33 family.</text>
</comment>
<protein>
    <recommendedName>
        <fullName evidence="1">33 kDa chaperonin</fullName>
    </recommendedName>
    <alternativeName>
        <fullName evidence="1">Heat shock protein 33 homolog</fullName>
        <shortName evidence="1">HSP33</shortName>
    </alternativeName>
</protein>
<evidence type="ECO:0000255" key="1">
    <source>
        <dbReference type="HAMAP-Rule" id="MF_00117"/>
    </source>
</evidence>
<keyword id="KW-0143">Chaperone</keyword>
<keyword id="KW-0963">Cytoplasm</keyword>
<keyword id="KW-1015">Disulfide bond</keyword>
<keyword id="KW-0676">Redox-active center</keyword>
<keyword id="KW-1185">Reference proteome</keyword>
<keyword id="KW-0862">Zinc</keyword>
<sequence>MNNDILHRYIFDNADVRGEIVQLESSYQEVLSAHIYPVALQALIGELLAATSLLTATIKFSGDISVQLQGDGPVSLAVINGNNKQVLRGVARWNGDIAADASLQQMFGKGYMVITLTPDEGERYQGIVSLDHVNLAACLEEYFNQSEQLPTQIQLFANGKQAAGMLLQVLPAKSGNNDDFEHLSALTSTIKAEELFTLDAEQVLHRLYHQEEVRLFDPVDVTFKCSCSRDRSAAAIKTLPQTEVEEILAEEGKIEMDCEYCTAKYSFDAIDIAALYSGSHSSQSQQ</sequence>
<name>HSLO_SHEFN</name>
<organism>
    <name type="scientific">Shewanella frigidimarina (strain NCIMB 400)</name>
    <dbReference type="NCBI Taxonomy" id="318167"/>
    <lineage>
        <taxon>Bacteria</taxon>
        <taxon>Pseudomonadati</taxon>
        <taxon>Pseudomonadota</taxon>
        <taxon>Gammaproteobacteria</taxon>
        <taxon>Alteromonadales</taxon>
        <taxon>Shewanellaceae</taxon>
        <taxon>Shewanella</taxon>
    </lineage>
</organism>
<proteinExistence type="inferred from homology"/>
<dbReference type="EMBL" id="CP000447">
    <property type="protein sequence ID" value="ABI69965.1"/>
    <property type="molecule type" value="Genomic_DNA"/>
</dbReference>
<dbReference type="RefSeq" id="WP_011635594.1">
    <property type="nucleotide sequence ID" value="NC_008345.1"/>
</dbReference>
<dbReference type="SMR" id="Q089V0"/>
<dbReference type="STRING" id="318167.Sfri_0102"/>
<dbReference type="KEGG" id="sfr:Sfri_0102"/>
<dbReference type="eggNOG" id="COG1281">
    <property type="taxonomic scope" value="Bacteria"/>
</dbReference>
<dbReference type="HOGENOM" id="CLU_054493_0_0_6"/>
<dbReference type="OrthoDB" id="9793753at2"/>
<dbReference type="Proteomes" id="UP000000684">
    <property type="component" value="Chromosome"/>
</dbReference>
<dbReference type="GO" id="GO:0005737">
    <property type="term" value="C:cytoplasm"/>
    <property type="evidence" value="ECO:0007669"/>
    <property type="project" value="UniProtKB-SubCell"/>
</dbReference>
<dbReference type="GO" id="GO:0044183">
    <property type="term" value="F:protein folding chaperone"/>
    <property type="evidence" value="ECO:0007669"/>
    <property type="project" value="TreeGrafter"/>
</dbReference>
<dbReference type="GO" id="GO:0051082">
    <property type="term" value="F:unfolded protein binding"/>
    <property type="evidence" value="ECO:0007669"/>
    <property type="project" value="UniProtKB-UniRule"/>
</dbReference>
<dbReference type="GO" id="GO:0042026">
    <property type="term" value="P:protein refolding"/>
    <property type="evidence" value="ECO:0007669"/>
    <property type="project" value="TreeGrafter"/>
</dbReference>
<dbReference type="CDD" id="cd00498">
    <property type="entry name" value="Hsp33"/>
    <property type="match status" value="1"/>
</dbReference>
<dbReference type="Gene3D" id="1.10.287.480">
    <property type="entry name" value="helix hairpin bin"/>
    <property type="match status" value="1"/>
</dbReference>
<dbReference type="Gene3D" id="3.55.30.10">
    <property type="entry name" value="Hsp33 domain"/>
    <property type="match status" value="1"/>
</dbReference>
<dbReference type="Gene3D" id="3.90.1280.10">
    <property type="entry name" value="HSP33 redox switch-like"/>
    <property type="match status" value="1"/>
</dbReference>
<dbReference type="HAMAP" id="MF_00117">
    <property type="entry name" value="HslO"/>
    <property type="match status" value="1"/>
</dbReference>
<dbReference type="InterPro" id="IPR000397">
    <property type="entry name" value="Heat_shock_Hsp33"/>
</dbReference>
<dbReference type="InterPro" id="IPR016154">
    <property type="entry name" value="Heat_shock_Hsp33_C"/>
</dbReference>
<dbReference type="InterPro" id="IPR016153">
    <property type="entry name" value="Heat_shock_Hsp33_N"/>
</dbReference>
<dbReference type="InterPro" id="IPR023212">
    <property type="entry name" value="Hsp33_helix_hairpin_bin_dom_sf"/>
</dbReference>
<dbReference type="NCBIfam" id="NF001033">
    <property type="entry name" value="PRK00114.1"/>
    <property type="match status" value="1"/>
</dbReference>
<dbReference type="PANTHER" id="PTHR30111">
    <property type="entry name" value="33 KDA CHAPERONIN"/>
    <property type="match status" value="1"/>
</dbReference>
<dbReference type="PANTHER" id="PTHR30111:SF1">
    <property type="entry name" value="33 KDA CHAPERONIN"/>
    <property type="match status" value="1"/>
</dbReference>
<dbReference type="Pfam" id="PF01430">
    <property type="entry name" value="HSP33"/>
    <property type="match status" value="1"/>
</dbReference>
<dbReference type="PIRSF" id="PIRSF005261">
    <property type="entry name" value="Heat_shock_Hsp33"/>
    <property type="match status" value="1"/>
</dbReference>
<dbReference type="SUPFAM" id="SSF64397">
    <property type="entry name" value="Hsp33 domain"/>
    <property type="match status" value="1"/>
</dbReference>
<dbReference type="SUPFAM" id="SSF118352">
    <property type="entry name" value="HSP33 redox switch-like"/>
    <property type="match status" value="1"/>
</dbReference>